<comment type="subunit">
    <text evidence="1">Part of the 50S ribosomal subunit.</text>
</comment>
<comment type="similarity">
    <text evidence="1">Belongs to the bacterial ribosomal protein bL31 family. Type B subfamily.</text>
</comment>
<name>R31B1_STRCO</name>
<proteinExistence type="inferred from homology"/>
<dbReference type="EMBL" id="AL939108">
    <property type="protein sequence ID" value="CAB88934.1"/>
    <property type="molecule type" value="Genomic_DNA"/>
</dbReference>
<dbReference type="RefSeq" id="NP_625442.1">
    <property type="nucleotide sequence ID" value="NC_003888.3"/>
</dbReference>
<dbReference type="RefSeq" id="WP_011027612.1">
    <property type="nucleotide sequence ID" value="NZ_VNID01000006.1"/>
</dbReference>
<dbReference type="SMR" id="Q9KZJ5"/>
<dbReference type="STRING" id="100226.gene:17758733"/>
<dbReference type="PaxDb" id="100226-SCO1150"/>
<dbReference type="KEGG" id="sco:SCO1150"/>
<dbReference type="PATRIC" id="fig|100226.15.peg.1148"/>
<dbReference type="eggNOG" id="COG0254">
    <property type="taxonomic scope" value="Bacteria"/>
</dbReference>
<dbReference type="HOGENOM" id="CLU_114306_2_2_11"/>
<dbReference type="InParanoid" id="Q9KZJ5"/>
<dbReference type="OrthoDB" id="9803251at2"/>
<dbReference type="PhylomeDB" id="Q9KZJ5"/>
<dbReference type="Proteomes" id="UP000001973">
    <property type="component" value="Chromosome"/>
</dbReference>
<dbReference type="GO" id="GO:1990904">
    <property type="term" value="C:ribonucleoprotein complex"/>
    <property type="evidence" value="ECO:0007669"/>
    <property type="project" value="UniProtKB-KW"/>
</dbReference>
<dbReference type="GO" id="GO:0005840">
    <property type="term" value="C:ribosome"/>
    <property type="evidence" value="ECO:0007669"/>
    <property type="project" value="UniProtKB-KW"/>
</dbReference>
<dbReference type="GO" id="GO:0003735">
    <property type="term" value="F:structural constituent of ribosome"/>
    <property type="evidence" value="ECO:0007669"/>
    <property type="project" value="InterPro"/>
</dbReference>
<dbReference type="GO" id="GO:0006412">
    <property type="term" value="P:translation"/>
    <property type="evidence" value="ECO:0007669"/>
    <property type="project" value="UniProtKB-UniRule"/>
</dbReference>
<dbReference type="Gene3D" id="4.10.830.30">
    <property type="entry name" value="Ribosomal protein L31"/>
    <property type="match status" value="1"/>
</dbReference>
<dbReference type="HAMAP" id="MF_00502">
    <property type="entry name" value="Ribosomal_bL31_2"/>
    <property type="match status" value="1"/>
</dbReference>
<dbReference type="InterPro" id="IPR034704">
    <property type="entry name" value="Ribosomal_bL28/bL31-like_sf"/>
</dbReference>
<dbReference type="InterPro" id="IPR002150">
    <property type="entry name" value="Ribosomal_bL31"/>
</dbReference>
<dbReference type="InterPro" id="IPR027493">
    <property type="entry name" value="Ribosomal_bL31_B"/>
</dbReference>
<dbReference type="InterPro" id="IPR042105">
    <property type="entry name" value="Ribosomal_bL31_sf"/>
</dbReference>
<dbReference type="NCBIfam" id="TIGR00105">
    <property type="entry name" value="L31"/>
    <property type="match status" value="1"/>
</dbReference>
<dbReference type="NCBIfam" id="NF002462">
    <property type="entry name" value="PRK01678.1"/>
    <property type="match status" value="1"/>
</dbReference>
<dbReference type="PANTHER" id="PTHR33280">
    <property type="entry name" value="50S RIBOSOMAL PROTEIN L31, CHLOROPLASTIC"/>
    <property type="match status" value="1"/>
</dbReference>
<dbReference type="PANTHER" id="PTHR33280:SF1">
    <property type="entry name" value="LARGE RIBOSOMAL SUBUNIT PROTEIN BL31C"/>
    <property type="match status" value="1"/>
</dbReference>
<dbReference type="Pfam" id="PF01197">
    <property type="entry name" value="Ribosomal_L31"/>
    <property type="match status" value="1"/>
</dbReference>
<dbReference type="PRINTS" id="PR01249">
    <property type="entry name" value="RIBOSOMALL31"/>
</dbReference>
<dbReference type="SUPFAM" id="SSF143800">
    <property type="entry name" value="L28p-like"/>
    <property type="match status" value="1"/>
</dbReference>
<dbReference type="PROSITE" id="PS01143">
    <property type="entry name" value="RIBOSOMAL_L31"/>
    <property type="match status" value="1"/>
</dbReference>
<reference key="1">
    <citation type="journal article" date="2002" name="Nature">
        <title>Complete genome sequence of the model actinomycete Streptomyces coelicolor A3(2).</title>
        <authorList>
            <person name="Bentley S.D."/>
            <person name="Chater K.F."/>
            <person name="Cerdeno-Tarraga A.-M."/>
            <person name="Challis G.L."/>
            <person name="Thomson N.R."/>
            <person name="James K.D."/>
            <person name="Harris D.E."/>
            <person name="Quail M.A."/>
            <person name="Kieser H."/>
            <person name="Harper D."/>
            <person name="Bateman A."/>
            <person name="Brown S."/>
            <person name="Chandra G."/>
            <person name="Chen C.W."/>
            <person name="Collins M."/>
            <person name="Cronin A."/>
            <person name="Fraser A."/>
            <person name="Goble A."/>
            <person name="Hidalgo J."/>
            <person name="Hornsby T."/>
            <person name="Howarth S."/>
            <person name="Huang C.-H."/>
            <person name="Kieser T."/>
            <person name="Larke L."/>
            <person name="Murphy L.D."/>
            <person name="Oliver K."/>
            <person name="O'Neil S."/>
            <person name="Rabbinowitsch E."/>
            <person name="Rajandream M.A."/>
            <person name="Rutherford K.M."/>
            <person name="Rutter S."/>
            <person name="Seeger K."/>
            <person name="Saunders D."/>
            <person name="Sharp S."/>
            <person name="Squares R."/>
            <person name="Squares S."/>
            <person name="Taylor K."/>
            <person name="Warren T."/>
            <person name="Wietzorrek A."/>
            <person name="Woodward J.R."/>
            <person name="Barrell B.G."/>
            <person name="Parkhill J."/>
            <person name="Hopwood D.A."/>
        </authorList>
    </citation>
    <scope>NUCLEOTIDE SEQUENCE [LARGE SCALE GENOMIC DNA]</scope>
    <source>
        <strain>ATCC BAA-471 / A3(2) / M145</strain>
    </source>
</reference>
<keyword id="KW-1185">Reference proteome</keyword>
<keyword id="KW-0687">Ribonucleoprotein</keyword>
<keyword id="KW-0689">Ribosomal protein</keyword>
<evidence type="ECO:0000255" key="1">
    <source>
        <dbReference type="HAMAP-Rule" id="MF_00502"/>
    </source>
</evidence>
<evidence type="ECO:0000305" key="2"/>
<gene>
    <name evidence="1" type="primary">rpmE2-1</name>
    <name type="ordered locus">SCO1150</name>
    <name type="ORF">SCG8A.04</name>
</gene>
<protein>
    <recommendedName>
        <fullName evidence="1">Large ribosomal subunit protein bL31B-1</fullName>
    </recommendedName>
    <alternativeName>
        <fullName evidence="2">50S ribosomal protein L31 type B 1</fullName>
    </alternativeName>
</protein>
<sequence length="90" mass="10063">MQQDKHPDYRPVVFRDRGAGYAFLTRSTATSDQTIVWDDGETYPVVEVEISSESHPFYTGKARTVDSEGRVARFERRYGAGEGQDTGEAG</sequence>
<accession>Q9KZJ5</accession>
<feature type="chain" id="PRO_0000173267" description="Large ribosomal subunit protein bL31B-1">
    <location>
        <begin position="1"/>
        <end position="90"/>
    </location>
</feature>
<organism>
    <name type="scientific">Streptomyces coelicolor (strain ATCC BAA-471 / A3(2) / M145)</name>
    <dbReference type="NCBI Taxonomy" id="100226"/>
    <lineage>
        <taxon>Bacteria</taxon>
        <taxon>Bacillati</taxon>
        <taxon>Actinomycetota</taxon>
        <taxon>Actinomycetes</taxon>
        <taxon>Kitasatosporales</taxon>
        <taxon>Streptomycetaceae</taxon>
        <taxon>Streptomyces</taxon>
        <taxon>Streptomyces albidoflavus group</taxon>
    </lineage>
</organism>